<organism>
    <name type="scientific">Porphyromonas gingivalis (strain ATCC 33277 / DSM 20709 / CIP 103683 / JCM 12257 / NCTC 11834 / 2561)</name>
    <dbReference type="NCBI Taxonomy" id="431947"/>
    <lineage>
        <taxon>Bacteria</taxon>
        <taxon>Pseudomonadati</taxon>
        <taxon>Bacteroidota</taxon>
        <taxon>Bacteroidia</taxon>
        <taxon>Bacteroidales</taxon>
        <taxon>Porphyromonadaceae</taxon>
        <taxon>Porphyromonas</taxon>
    </lineage>
</organism>
<protein>
    <recommendedName>
        <fullName evidence="1">Large ribosomal subunit protein bL28</fullName>
    </recommendedName>
    <alternativeName>
        <fullName evidence="2">50S ribosomal protein L28</fullName>
    </alternativeName>
</protein>
<feature type="chain" id="PRO_1000121669" description="Large ribosomal subunit protein bL28">
    <location>
        <begin position="1"/>
        <end position="79"/>
    </location>
</feature>
<keyword id="KW-0687">Ribonucleoprotein</keyword>
<keyword id="KW-0689">Ribosomal protein</keyword>
<reference key="1">
    <citation type="journal article" date="2008" name="DNA Res.">
        <title>Determination of the genome sequence of Porphyromonas gingivalis strain ATCC 33277 and genomic comparison with strain W83 revealed extensive genome rearrangements in P. gingivalis.</title>
        <authorList>
            <person name="Naito M."/>
            <person name="Hirakawa H."/>
            <person name="Yamashita A."/>
            <person name="Ohara N."/>
            <person name="Shoji M."/>
            <person name="Yukitake H."/>
            <person name="Nakayama K."/>
            <person name="Toh H."/>
            <person name="Yoshimura F."/>
            <person name="Kuhara S."/>
            <person name="Hattori M."/>
            <person name="Hayashi T."/>
            <person name="Nakayama K."/>
        </authorList>
    </citation>
    <scope>NUCLEOTIDE SEQUENCE [LARGE SCALE GENOMIC DNA]</scope>
    <source>
        <strain>ATCC 33277 / DSM 20709 / CIP 103683 / JCM 12257 / NCTC 11834 / 2561</strain>
    </source>
</reference>
<sequence>MSKICQITGKKAMVGNNVSHSKRRTKRVFDVNLFRKKFYWVEQDCWVVLRISAAGLRLINKIGLDAAIKRAAEKGFLNA</sequence>
<accession>B2RM15</accession>
<name>RL28_PORG3</name>
<evidence type="ECO:0000255" key="1">
    <source>
        <dbReference type="HAMAP-Rule" id="MF_00373"/>
    </source>
</evidence>
<evidence type="ECO:0000305" key="2"/>
<comment type="similarity">
    <text evidence="1">Belongs to the bacterial ribosomal protein bL28 family.</text>
</comment>
<gene>
    <name evidence="1" type="primary">rpmB</name>
    <name type="ordered locus">PGN_1891</name>
</gene>
<dbReference type="EMBL" id="AP009380">
    <property type="protein sequence ID" value="BAG34410.1"/>
    <property type="molecule type" value="Genomic_DNA"/>
</dbReference>
<dbReference type="RefSeq" id="WP_004583624.1">
    <property type="nucleotide sequence ID" value="NZ_CP025930.1"/>
</dbReference>
<dbReference type="SMR" id="B2RM15"/>
<dbReference type="GeneID" id="57239615"/>
<dbReference type="KEGG" id="pgn:PGN_1891"/>
<dbReference type="eggNOG" id="COG0227">
    <property type="taxonomic scope" value="Bacteria"/>
</dbReference>
<dbReference type="HOGENOM" id="CLU_064548_3_1_10"/>
<dbReference type="OrthoDB" id="9805609at2"/>
<dbReference type="BioCyc" id="PGIN431947:G1G2V-2107-MONOMER"/>
<dbReference type="Proteomes" id="UP000008842">
    <property type="component" value="Chromosome"/>
</dbReference>
<dbReference type="GO" id="GO:1990904">
    <property type="term" value="C:ribonucleoprotein complex"/>
    <property type="evidence" value="ECO:0007669"/>
    <property type="project" value="UniProtKB-KW"/>
</dbReference>
<dbReference type="GO" id="GO:0005840">
    <property type="term" value="C:ribosome"/>
    <property type="evidence" value="ECO:0007669"/>
    <property type="project" value="UniProtKB-KW"/>
</dbReference>
<dbReference type="GO" id="GO:0003735">
    <property type="term" value="F:structural constituent of ribosome"/>
    <property type="evidence" value="ECO:0007669"/>
    <property type="project" value="InterPro"/>
</dbReference>
<dbReference type="GO" id="GO:0006412">
    <property type="term" value="P:translation"/>
    <property type="evidence" value="ECO:0007669"/>
    <property type="project" value="UniProtKB-UniRule"/>
</dbReference>
<dbReference type="Gene3D" id="2.30.170.40">
    <property type="entry name" value="Ribosomal protein L28/L24"/>
    <property type="match status" value="1"/>
</dbReference>
<dbReference type="HAMAP" id="MF_00373">
    <property type="entry name" value="Ribosomal_bL28"/>
    <property type="match status" value="1"/>
</dbReference>
<dbReference type="InterPro" id="IPR026569">
    <property type="entry name" value="Ribosomal_bL28"/>
</dbReference>
<dbReference type="InterPro" id="IPR034704">
    <property type="entry name" value="Ribosomal_bL28/bL31-like_sf"/>
</dbReference>
<dbReference type="InterPro" id="IPR001383">
    <property type="entry name" value="Ribosomal_bL28_bact-type"/>
</dbReference>
<dbReference type="InterPro" id="IPR037147">
    <property type="entry name" value="Ribosomal_bL28_sf"/>
</dbReference>
<dbReference type="NCBIfam" id="TIGR00009">
    <property type="entry name" value="L28"/>
    <property type="match status" value="1"/>
</dbReference>
<dbReference type="PANTHER" id="PTHR13528">
    <property type="entry name" value="39S RIBOSOMAL PROTEIN L28, MITOCHONDRIAL"/>
    <property type="match status" value="1"/>
</dbReference>
<dbReference type="PANTHER" id="PTHR13528:SF2">
    <property type="entry name" value="LARGE RIBOSOMAL SUBUNIT PROTEIN BL28M"/>
    <property type="match status" value="1"/>
</dbReference>
<dbReference type="Pfam" id="PF00830">
    <property type="entry name" value="Ribosomal_L28"/>
    <property type="match status" value="1"/>
</dbReference>
<dbReference type="SUPFAM" id="SSF143800">
    <property type="entry name" value="L28p-like"/>
    <property type="match status" value="1"/>
</dbReference>
<proteinExistence type="inferred from homology"/>